<accession>B5ZV36</accession>
<organism>
    <name type="scientific">Rhizobium leguminosarum bv. trifolii (strain WSM2304)</name>
    <dbReference type="NCBI Taxonomy" id="395492"/>
    <lineage>
        <taxon>Bacteria</taxon>
        <taxon>Pseudomonadati</taxon>
        <taxon>Pseudomonadota</taxon>
        <taxon>Alphaproteobacteria</taxon>
        <taxon>Hyphomicrobiales</taxon>
        <taxon>Rhizobiaceae</taxon>
        <taxon>Rhizobium/Agrobacterium group</taxon>
        <taxon>Rhizobium</taxon>
    </lineage>
</organism>
<protein>
    <recommendedName>
        <fullName evidence="1">Acetyl-coenzyme A synthetase</fullName>
        <shortName evidence="1">AcCoA synthetase</shortName>
        <shortName evidence="1">Acs</shortName>
        <ecNumber evidence="1">6.2.1.1</ecNumber>
    </recommendedName>
    <alternativeName>
        <fullName evidence="1">Acetate--CoA ligase</fullName>
    </alternativeName>
    <alternativeName>
        <fullName evidence="1">Acyl-activating enzyme</fullName>
    </alternativeName>
</protein>
<keyword id="KW-0007">Acetylation</keyword>
<keyword id="KW-0067">ATP-binding</keyword>
<keyword id="KW-0436">Ligase</keyword>
<keyword id="KW-0460">Magnesium</keyword>
<keyword id="KW-0479">Metal-binding</keyword>
<keyword id="KW-0547">Nucleotide-binding</keyword>
<keyword id="KW-1185">Reference proteome</keyword>
<gene>
    <name evidence="1" type="primary">acsA</name>
    <name type="ordered locus">Rleg2_3920</name>
</gene>
<feature type="chain" id="PRO_1000137276" description="Acetyl-coenzyme A synthetase">
    <location>
        <begin position="1"/>
        <end position="651"/>
    </location>
</feature>
<feature type="binding site" evidence="1">
    <location>
        <begin position="189"/>
        <end position="192"/>
    </location>
    <ligand>
        <name>CoA</name>
        <dbReference type="ChEBI" id="CHEBI:57287"/>
    </ligand>
</feature>
<feature type="binding site" evidence="1">
    <location>
        <position position="311"/>
    </location>
    <ligand>
        <name>CoA</name>
        <dbReference type="ChEBI" id="CHEBI:57287"/>
    </ligand>
</feature>
<feature type="binding site" evidence="1">
    <location>
        <position position="335"/>
    </location>
    <ligand>
        <name>CoA</name>
        <dbReference type="ChEBI" id="CHEBI:57287"/>
    </ligand>
</feature>
<feature type="binding site" evidence="1">
    <location>
        <begin position="387"/>
        <end position="389"/>
    </location>
    <ligand>
        <name>ATP</name>
        <dbReference type="ChEBI" id="CHEBI:30616"/>
    </ligand>
</feature>
<feature type="binding site" evidence="1">
    <location>
        <begin position="411"/>
        <end position="416"/>
    </location>
    <ligand>
        <name>ATP</name>
        <dbReference type="ChEBI" id="CHEBI:30616"/>
    </ligand>
</feature>
<feature type="binding site" evidence="1">
    <location>
        <position position="500"/>
    </location>
    <ligand>
        <name>ATP</name>
        <dbReference type="ChEBI" id="CHEBI:30616"/>
    </ligand>
</feature>
<feature type="binding site" evidence="1">
    <location>
        <position position="515"/>
    </location>
    <ligand>
        <name>ATP</name>
        <dbReference type="ChEBI" id="CHEBI:30616"/>
    </ligand>
</feature>
<feature type="binding site" evidence="1">
    <location>
        <position position="523"/>
    </location>
    <ligand>
        <name>CoA</name>
        <dbReference type="ChEBI" id="CHEBI:57287"/>
    </ligand>
</feature>
<feature type="binding site" evidence="1">
    <location>
        <position position="526"/>
    </location>
    <ligand>
        <name>ATP</name>
        <dbReference type="ChEBI" id="CHEBI:30616"/>
    </ligand>
</feature>
<feature type="binding site" evidence="1">
    <location>
        <position position="537"/>
    </location>
    <ligand>
        <name>Mg(2+)</name>
        <dbReference type="ChEBI" id="CHEBI:18420"/>
    </ligand>
</feature>
<feature type="binding site" evidence="1">
    <location>
        <position position="539"/>
    </location>
    <ligand>
        <name>Mg(2+)</name>
        <dbReference type="ChEBI" id="CHEBI:18420"/>
    </ligand>
</feature>
<feature type="binding site" evidence="1">
    <location>
        <position position="542"/>
    </location>
    <ligand>
        <name>Mg(2+)</name>
        <dbReference type="ChEBI" id="CHEBI:18420"/>
    </ligand>
</feature>
<feature type="binding site" evidence="1">
    <location>
        <position position="584"/>
    </location>
    <ligand>
        <name>CoA</name>
        <dbReference type="ChEBI" id="CHEBI:57287"/>
    </ligand>
</feature>
<feature type="modified residue" description="N6-acetyllysine" evidence="1">
    <location>
        <position position="609"/>
    </location>
</feature>
<evidence type="ECO:0000255" key="1">
    <source>
        <dbReference type="HAMAP-Rule" id="MF_01123"/>
    </source>
</evidence>
<sequence length="651" mass="72396">MSEKIYPVTKPVKARALIDKEKYLKWYEESVENPDKFWGKHGKRIDWFKPYTKVKNTSFTGKVSIKWFEDGQTNVSYNCIDRHLKTNGDQVAIIWEGDNPYIDKKVTYNELYEHVCRMANVLKKHGVKKGDRVTIYMPMIPEAAYAMLACARIGAVHSVVFGGFSPEALAGRIVDCESTFVITCDEGLRGGKPVPLKDNTDTAIHIAARQHVHVSKVLVVRRTGGKTGWAPGRDLWHHQEIATVKPECPPVKMKAEDPLFILYTSGSTGKPKGVLHTTGGYLVYAAMTHEYVFDYHDGDVYWCTADVGWVTGHSYIVYGPLANCATTLMFEGVPNFPDQGRFWEVIDKHKVNIFYTAPTAIRSLMGAGDDFVTRSSRSSLRLLGTVGEPINPEAWEWYYNVVGDKRCPVIDTWWQTETGGHMITPLPGAIDLKPGSATVPFFGIKPELVDNEGKVLEGAADGNLCITDSWPGQMRTVYGDHDRFIQTYFSTYKGKYFTGDGCRRDADGYYWITGRVDDVLNVSGHRLGTAEVESALVSHNLVSEAAVVGYPHPIKGQGIYCYVTLMAGHEGTDTLRQDLVKHVRAEIGPIAAPDKIQFAPGLPKTRSGKIMRRILRKIAEDDFGALGDTSTLADPAVVDDLIANRQNKATA</sequence>
<comment type="function">
    <text evidence="1">Catalyzes the conversion of acetate into acetyl-CoA (AcCoA), an essential intermediate at the junction of anabolic and catabolic pathways. AcsA undergoes a two-step reaction. In the first half reaction, AcsA combines acetate with ATP to form acetyl-adenylate (AcAMP) intermediate. In the second half reaction, it can then transfer the acetyl group from AcAMP to the sulfhydryl group of CoA, forming the product AcCoA.</text>
</comment>
<comment type="catalytic activity">
    <reaction evidence="1">
        <text>acetate + ATP + CoA = acetyl-CoA + AMP + diphosphate</text>
        <dbReference type="Rhea" id="RHEA:23176"/>
        <dbReference type="ChEBI" id="CHEBI:30089"/>
        <dbReference type="ChEBI" id="CHEBI:30616"/>
        <dbReference type="ChEBI" id="CHEBI:33019"/>
        <dbReference type="ChEBI" id="CHEBI:57287"/>
        <dbReference type="ChEBI" id="CHEBI:57288"/>
        <dbReference type="ChEBI" id="CHEBI:456215"/>
        <dbReference type="EC" id="6.2.1.1"/>
    </reaction>
</comment>
<comment type="cofactor">
    <cofactor evidence="1">
        <name>Mg(2+)</name>
        <dbReference type="ChEBI" id="CHEBI:18420"/>
    </cofactor>
</comment>
<comment type="PTM">
    <text evidence="1">Acetylated. Deacetylation by the SIR2-homolog deacetylase activates the enzyme.</text>
</comment>
<comment type="similarity">
    <text evidence="1">Belongs to the ATP-dependent AMP-binding enzyme family.</text>
</comment>
<name>ACSA_RHILW</name>
<reference key="1">
    <citation type="journal article" date="2010" name="Stand. Genomic Sci.">
        <title>Complete genome sequence of Rhizobium leguminosarum bv trifolii strain WSM2304, an effective microsymbiont of the South American clover Trifolium polymorphum.</title>
        <authorList>
            <person name="Reeve W."/>
            <person name="O'Hara G."/>
            <person name="Chain P."/>
            <person name="Ardley J."/>
            <person name="Brau L."/>
            <person name="Nandesena K."/>
            <person name="Tiwari R."/>
            <person name="Malfatti S."/>
            <person name="Kiss H."/>
            <person name="Lapidus A."/>
            <person name="Copeland A."/>
            <person name="Nolan M."/>
            <person name="Land M."/>
            <person name="Ivanova N."/>
            <person name="Mavromatis K."/>
            <person name="Markowitz V."/>
            <person name="Kyrpides N."/>
            <person name="Melino V."/>
            <person name="Denton M."/>
            <person name="Yates R."/>
            <person name="Howieson J."/>
        </authorList>
    </citation>
    <scope>NUCLEOTIDE SEQUENCE [LARGE SCALE GENOMIC DNA]</scope>
    <source>
        <strain>WSM2304</strain>
    </source>
</reference>
<dbReference type="EC" id="6.2.1.1" evidence="1"/>
<dbReference type="EMBL" id="CP001191">
    <property type="protein sequence ID" value="ACI57182.1"/>
    <property type="molecule type" value="Genomic_DNA"/>
</dbReference>
<dbReference type="RefSeq" id="WP_003589550.1">
    <property type="nucleotide sequence ID" value="NC_011369.1"/>
</dbReference>
<dbReference type="SMR" id="B5ZV36"/>
<dbReference type="STRING" id="395492.Rleg2_3920"/>
<dbReference type="KEGG" id="rlt:Rleg2_3920"/>
<dbReference type="eggNOG" id="COG0365">
    <property type="taxonomic scope" value="Bacteria"/>
</dbReference>
<dbReference type="HOGENOM" id="CLU_000022_3_6_5"/>
<dbReference type="Proteomes" id="UP000008330">
    <property type="component" value="Chromosome"/>
</dbReference>
<dbReference type="GO" id="GO:0005829">
    <property type="term" value="C:cytosol"/>
    <property type="evidence" value="ECO:0007669"/>
    <property type="project" value="TreeGrafter"/>
</dbReference>
<dbReference type="GO" id="GO:0003987">
    <property type="term" value="F:acetate-CoA ligase activity"/>
    <property type="evidence" value="ECO:0007669"/>
    <property type="project" value="UniProtKB-UniRule"/>
</dbReference>
<dbReference type="GO" id="GO:0016208">
    <property type="term" value="F:AMP binding"/>
    <property type="evidence" value="ECO:0007669"/>
    <property type="project" value="InterPro"/>
</dbReference>
<dbReference type="GO" id="GO:0005524">
    <property type="term" value="F:ATP binding"/>
    <property type="evidence" value="ECO:0007669"/>
    <property type="project" value="UniProtKB-KW"/>
</dbReference>
<dbReference type="GO" id="GO:0046872">
    <property type="term" value="F:metal ion binding"/>
    <property type="evidence" value="ECO:0007669"/>
    <property type="project" value="UniProtKB-KW"/>
</dbReference>
<dbReference type="GO" id="GO:0019427">
    <property type="term" value="P:acetyl-CoA biosynthetic process from acetate"/>
    <property type="evidence" value="ECO:0007669"/>
    <property type="project" value="InterPro"/>
</dbReference>
<dbReference type="CDD" id="cd05966">
    <property type="entry name" value="ACS"/>
    <property type="match status" value="1"/>
</dbReference>
<dbReference type="FunFam" id="3.30.300.30:FF:000004">
    <property type="entry name" value="Acetyl-coenzyme A synthetase"/>
    <property type="match status" value="1"/>
</dbReference>
<dbReference type="FunFam" id="3.40.50.12780:FF:000001">
    <property type="entry name" value="Acetyl-coenzyme A synthetase"/>
    <property type="match status" value="1"/>
</dbReference>
<dbReference type="Gene3D" id="3.30.300.30">
    <property type="match status" value="1"/>
</dbReference>
<dbReference type="Gene3D" id="3.40.50.12780">
    <property type="entry name" value="N-terminal domain of ligase-like"/>
    <property type="match status" value="1"/>
</dbReference>
<dbReference type="HAMAP" id="MF_01123">
    <property type="entry name" value="Ac_CoA_synth"/>
    <property type="match status" value="1"/>
</dbReference>
<dbReference type="InterPro" id="IPR011904">
    <property type="entry name" value="Ac_CoA_lig"/>
</dbReference>
<dbReference type="InterPro" id="IPR032387">
    <property type="entry name" value="ACAS_N"/>
</dbReference>
<dbReference type="InterPro" id="IPR025110">
    <property type="entry name" value="AMP-bd_C"/>
</dbReference>
<dbReference type="InterPro" id="IPR045851">
    <property type="entry name" value="AMP-bd_C_sf"/>
</dbReference>
<dbReference type="InterPro" id="IPR020845">
    <property type="entry name" value="AMP-binding_CS"/>
</dbReference>
<dbReference type="InterPro" id="IPR000873">
    <property type="entry name" value="AMP-dep_synth/lig_dom"/>
</dbReference>
<dbReference type="InterPro" id="IPR042099">
    <property type="entry name" value="ANL_N_sf"/>
</dbReference>
<dbReference type="NCBIfam" id="TIGR02188">
    <property type="entry name" value="Ac_CoA_lig_AcsA"/>
    <property type="match status" value="1"/>
</dbReference>
<dbReference type="NCBIfam" id="NF001208">
    <property type="entry name" value="PRK00174.1"/>
    <property type="match status" value="1"/>
</dbReference>
<dbReference type="PANTHER" id="PTHR24095">
    <property type="entry name" value="ACETYL-COENZYME A SYNTHETASE"/>
    <property type="match status" value="1"/>
</dbReference>
<dbReference type="PANTHER" id="PTHR24095:SF14">
    <property type="entry name" value="ACETYL-COENZYME A SYNTHETASE 1"/>
    <property type="match status" value="1"/>
</dbReference>
<dbReference type="Pfam" id="PF16177">
    <property type="entry name" value="ACAS_N"/>
    <property type="match status" value="1"/>
</dbReference>
<dbReference type="Pfam" id="PF00501">
    <property type="entry name" value="AMP-binding"/>
    <property type="match status" value="1"/>
</dbReference>
<dbReference type="Pfam" id="PF13193">
    <property type="entry name" value="AMP-binding_C"/>
    <property type="match status" value="1"/>
</dbReference>
<dbReference type="SUPFAM" id="SSF56801">
    <property type="entry name" value="Acetyl-CoA synthetase-like"/>
    <property type="match status" value="1"/>
</dbReference>
<dbReference type="PROSITE" id="PS00455">
    <property type="entry name" value="AMP_BINDING"/>
    <property type="match status" value="1"/>
</dbReference>
<proteinExistence type="inferred from homology"/>